<accession>B1J596</accession>
<proteinExistence type="inferred from homology"/>
<gene>
    <name type="ordered locus">PputW619_1602</name>
</gene>
<comment type="function">
    <text evidence="1">Catalyzes the aldol cleavage of 4-hydroxy-4-methyl-2-oxoglutarate (HMG) into 2 molecules of pyruvate. Also contains a secondary oxaloacetate (OAA) decarboxylase activity due to the common pyruvate enolate transition state formed following C-C bond cleavage in the retro-aldol and decarboxylation reactions (By similarity).</text>
</comment>
<comment type="catalytic activity">
    <reaction>
        <text>4-hydroxy-4-methyl-2-oxoglutarate = 2 pyruvate</text>
        <dbReference type="Rhea" id="RHEA:22748"/>
        <dbReference type="ChEBI" id="CHEBI:15361"/>
        <dbReference type="ChEBI" id="CHEBI:58276"/>
        <dbReference type="EC" id="4.1.3.17"/>
    </reaction>
</comment>
<comment type="catalytic activity">
    <reaction>
        <text>oxaloacetate + H(+) = pyruvate + CO2</text>
        <dbReference type="Rhea" id="RHEA:15641"/>
        <dbReference type="ChEBI" id="CHEBI:15361"/>
        <dbReference type="ChEBI" id="CHEBI:15378"/>
        <dbReference type="ChEBI" id="CHEBI:16452"/>
        <dbReference type="ChEBI" id="CHEBI:16526"/>
        <dbReference type="EC" id="4.1.1.112"/>
    </reaction>
</comment>
<comment type="cofactor">
    <cofactor evidence="1">
        <name>a divalent metal cation</name>
        <dbReference type="ChEBI" id="CHEBI:60240"/>
    </cofactor>
    <text evidence="1">Divalent metal cation.</text>
</comment>
<comment type="subunit">
    <text evidence="1">Homotrimer.</text>
</comment>
<comment type="similarity">
    <text evidence="2">Belongs to the class II aldolase/RraA-like family.</text>
</comment>
<protein>
    <recommendedName>
        <fullName>Putative 4-hydroxy-4-methyl-2-oxoglutarate aldolase</fullName>
        <shortName>HMG aldolase</shortName>
        <ecNumber>4.1.3.17</ecNumber>
    </recommendedName>
    <alternativeName>
        <fullName>Oxaloacetate decarboxylase</fullName>
        <shortName>OAA decarboxylase</shortName>
        <ecNumber>4.1.1.112</ecNumber>
    </alternativeName>
    <alternativeName>
        <fullName>Regulator of ribonuclease activity homolog</fullName>
    </alternativeName>
    <alternativeName>
        <fullName>RraA-like protein</fullName>
    </alternativeName>
</protein>
<name>RRAAH_PSEPW</name>
<evidence type="ECO:0000250" key="1"/>
<evidence type="ECO:0000305" key="2"/>
<reference key="1">
    <citation type="submission" date="2008-02" db="EMBL/GenBank/DDBJ databases">
        <title>Complete sequence of Pseudomonas putida W619.</title>
        <authorList>
            <person name="Copeland A."/>
            <person name="Lucas S."/>
            <person name="Lapidus A."/>
            <person name="Barry K."/>
            <person name="Detter J.C."/>
            <person name="Glavina del Rio T."/>
            <person name="Dalin E."/>
            <person name="Tice H."/>
            <person name="Pitluck S."/>
            <person name="Chain P."/>
            <person name="Malfatti S."/>
            <person name="Shin M."/>
            <person name="Vergez L."/>
            <person name="Schmutz J."/>
            <person name="Larimer F."/>
            <person name="Land M."/>
            <person name="Hauser L."/>
            <person name="Kyrpides N."/>
            <person name="Kim E."/>
            <person name="Taghavi S."/>
            <person name="Vangronsveld D."/>
            <person name="van der Lelie D."/>
            <person name="Richardson P."/>
        </authorList>
    </citation>
    <scope>NUCLEOTIDE SEQUENCE [LARGE SCALE GENOMIC DNA]</scope>
    <source>
        <strain>W619</strain>
    </source>
</reference>
<dbReference type="EC" id="4.1.3.17"/>
<dbReference type="EC" id="4.1.1.112"/>
<dbReference type="EMBL" id="CP000949">
    <property type="protein sequence ID" value="ACA72107.1"/>
    <property type="molecule type" value="Genomic_DNA"/>
</dbReference>
<dbReference type="SMR" id="B1J596"/>
<dbReference type="STRING" id="390235.PputW619_1602"/>
<dbReference type="KEGG" id="ppw:PputW619_1602"/>
<dbReference type="eggNOG" id="COG0684">
    <property type="taxonomic scope" value="Bacteria"/>
</dbReference>
<dbReference type="HOGENOM" id="CLU_072626_4_0_6"/>
<dbReference type="OrthoDB" id="943692at2"/>
<dbReference type="GO" id="GO:0047443">
    <property type="term" value="F:4-hydroxy-4-methyl-2-oxoglutarate aldolase activity"/>
    <property type="evidence" value="ECO:0007669"/>
    <property type="project" value="UniProtKB-EC"/>
</dbReference>
<dbReference type="GO" id="GO:0046872">
    <property type="term" value="F:metal ion binding"/>
    <property type="evidence" value="ECO:0007669"/>
    <property type="project" value="UniProtKB-KW"/>
</dbReference>
<dbReference type="GO" id="GO:0008948">
    <property type="term" value="F:oxaloacetate decarboxylase activity"/>
    <property type="evidence" value="ECO:0007669"/>
    <property type="project" value="UniProtKB-EC"/>
</dbReference>
<dbReference type="GO" id="GO:0008428">
    <property type="term" value="F:ribonuclease inhibitor activity"/>
    <property type="evidence" value="ECO:0007669"/>
    <property type="project" value="InterPro"/>
</dbReference>
<dbReference type="GO" id="GO:0051252">
    <property type="term" value="P:regulation of RNA metabolic process"/>
    <property type="evidence" value="ECO:0007669"/>
    <property type="project" value="InterPro"/>
</dbReference>
<dbReference type="CDD" id="cd16841">
    <property type="entry name" value="RraA_family"/>
    <property type="match status" value="1"/>
</dbReference>
<dbReference type="Gene3D" id="3.50.30.40">
    <property type="entry name" value="Ribonuclease E inhibitor RraA/RraA-like"/>
    <property type="match status" value="1"/>
</dbReference>
<dbReference type="InterPro" id="IPR010203">
    <property type="entry name" value="RraA"/>
</dbReference>
<dbReference type="InterPro" id="IPR005493">
    <property type="entry name" value="RraA/RraA-like"/>
</dbReference>
<dbReference type="InterPro" id="IPR036704">
    <property type="entry name" value="RraA/RraA-like_sf"/>
</dbReference>
<dbReference type="NCBIfam" id="TIGR01935">
    <property type="entry name" value="NOT-MenG"/>
    <property type="match status" value="1"/>
</dbReference>
<dbReference type="NCBIfam" id="NF006875">
    <property type="entry name" value="PRK09372.1"/>
    <property type="match status" value="1"/>
</dbReference>
<dbReference type="NCBIfam" id="NF009134">
    <property type="entry name" value="PRK12487.1"/>
    <property type="match status" value="1"/>
</dbReference>
<dbReference type="PANTHER" id="PTHR33254">
    <property type="entry name" value="4-HYDROXY-4-METHYL-2-OXOGLUTARATE ALDOLASE 3-RELATED"/>
    <property type="match status" value="1"/>
</dbReference>
<dbReference type="PANTHER" id="PTHR33254:SF29">
    <property type="entry name" value="REGULATOR OF RIBONUCLEASE ACTIVITY A"/>
    <property type="match status" value="1"/>
</dbReference>
<dbReference type="Pfam" id="PF03737">
    <property type="entry name" value="RraA-like"/>
    <property type="match status" value="1"/>
</dbReference>
<dbReference type="SUPFAM" id="SSF89562">
    <property type="entry name" value="RraA-like"/>
    <property type="match status" value="1"/>
</dbReference>
<feature type="chain" id="PRO_1000194867" description="Putative 4-hydroxy-4-methyl-2-oxoglutarate aldolase">
    <location>
        <begin position="1"/>
        <end position="163"/>
    </location>
</feature>
<feature type="binding site" evidence="1">
    <location>
        <begin position="76"/>
        <end position="79"/>
    </location>
    <ligand>
        <name>substrate</name>
    </ligand>
</feature>
<feature type="binding site" evidence="1">
    <location>
        <position position="98"/>
    </location>
    <ligand>
        <name>substrate</name>
    </ligand>
</feature>
<feature type="binding site" evidence="1">
    <location>
        <position position="99"/>
    </location>
    <ligand>
        <name>a divalent metal cation</name>
        <dbReference type="ChEBI" id="CHEBI:60240"/>
    </ligand>
</feature>
<keyword id="KW-0456">Lyase</keyword>
<keyword id="KW-0479">Metal-binding</keyword>
<organism>
    <name type="scientific">Pseudomonas putida (strain W619)</name>
    <dbReference type="NCBI Taxonomy" id="390235"/>
    <lineage>
        <taxon>Bacteria</taxon>
        <taxon>Pseudomonadati</taxon>
        <taxon>Pseudomonadota</taxon>
        <taxon>Gammaproteobacteria</taxon>
        <taxon>Pseudomonadales</taxon>
        <taxon>Pseudomonadaceae</taxon>
        <taxon>Pseudomonas</taxon>
    </lineage>
</organism>
<sequence length="163" mass="17539">MQHYVTPDLCDAYPDLVQVLEPMFSNFGGRDSFGGQIVTIKCFEDNSRVKEQVELDGKGKVLVVDGGGSLRCALLGDMLAEKAAKNGWEGLVIYGCVRDVDVLIQTSVGVQALASHPMKTDKRGIGDLNVAVTFAGVTFRPGEYVYADNNGVIVSPSPLEMPQ</sequence>